<name>LIP4_MALFU</name>
<accession>E1CJK2</accession>
<proteinExistence type="evidence at transcript level"/>
<organism>
    <name type="scientific">Malassezia furfur</name>
    <name type="common">Pityriasis versicolor infection agent</name>
    <name type="synonym">Pityrosporum furfur</name>
    <dbReference type="NCBI Taxonomy" id="55194"/>
    <lineage>
        <taxon>Eukaryota</taxon>
        <taxon>Fungi</taxon>
        <taxon>Dikarya</taxon>
        <taxon>Basidiomycota</taxon>
        <taxon>Ustilaginomycotina</taxon>
        <taxon>Malasseziomycetes</taxon>
        <taxon>Malasseziales</taxon>
        <taxon>Malasseziaceae</taxon>
        <taxon>Malassezia</taxon>
    </lineage>
</organism>
<gene>
    <name evidence="7" type="primary">LIP4</name>
</gene>
<feature type="signal peptide" evidence="2">
    <location>
        <begin position="1"/>
        <end position="26"/>
    </location>
</feature>
<feature type="chain" id="PRO_0000459493" description="Secreted triacylglycerol lipase LIP4">
    <location>
        <begin position="27"/>
        <end position="526"/>
    </location>
</feature>
<feature type="region of interest" description="Disordered" evidence="4">
    <location>
        <begin position="412"/>
        <end position="526"/>
    </location>
</feature>
<feature type="compositionally biased region" description="Low complexity" evidence="4">
    <location>
        <begin position="413"/>
        <end position="423"/>
    </location>
</feature>
<feature type="compositionally biased region" description="Low complexity" evidence="4">
    <location>
        <begin position="430"/>
        <end position="457"/>
    </location>
</feature>
<feature type="compositionally biased region" description="Low complexity" evidence="4">
    <location>
        <begin position="480"/>
        <end position="490"/>
    </location>
</feature>
<feature type="compositionally biased region" description="Pro residues" evidence="4">
    <location>
        <begin position="516"/>
        <end position="526"/>
    </location>
</feature>
<feature type="active site" description="Nucleophile" evidence="1">
    <location>
        <position position="195"/>
    </location>
</feature>
<feature type="active site" evidence="1">
    <location>
        <position position="342"/>
    </location>
</feature>
<feature type="active site" evidence="1">
    <location>
        <position position="376"/>
    </location>
</feature>
<feature type="glycosylation site" description="N-linked (GlcNAc...) asparagine" evidence="3">
    <location>
        <position position="186"/>
    </location>
</feature>
<feature type="glycosylation site" description="N-linked (GlcNAc...) asparagine" evidence="3">
    <location>
        <position position="228"/>
    </location>
</feature>
<feature type="glycosylation site" description="N-linked (GlcNAc...) asparagine" evidence="3">
    <location>
        <position position="377"/>
    </location>
</feature>
<feature type="glycosylation site" description="N-linked (GlcNAc...) asparagine" evidence="3">
    <location>
        <position position="462"/>
    </location>
</feature>
<keyword id="KW-0325">Glycoprotein</keyword>
<keyword id="KW-0378">Hydrolase</keyword>
<keyword id="KW-0442">Lipid degradation</keyword>
<keyword id="KW-0443">Lipid metabolism</keyword>
<keyword id="KW-0964">Secreted</keyword>
<keyword id="KW-0732">Signal</keyword>
<keyword id="KW-0843">Virulence</keyword>
<dbReference type="EC" id="3.1.1.-" evidence="9"/>
<dbReference type="EC" id="3.1.1.3" evidence="9"/>
<dbReference type="EMBL" id="AB573430">
    <property type="protein sequence ID" value="BAJ13318.1"/>
    <property type="molecule type" value="Genomic_DNA"/>
</dbReference>
<dbReference type="SMR" id="E1CJK2"/>
<dbReference type="ESTHER" id="malfu-e1cjk2">
    <property type="family name" value="Fungal-Bact_LIP"/>
</dbReference>
<dbReference type="GO" id="GO:0005576">
    <property type="term" value="C:extracellular region"/>
    <property type="evidence" value="ECO:0007669"/>
    <property type="project" value="UniProtKB-SubCell"/>
</dbReference>
<dbReference type="GO" id="GO:0004806">
    <property type="term" value="F:triacylglycerol lipase activity"/>
    <property type="evidence" value="ECO:0007669"/>
    <property type="project" value="InterPro"/>
</dbReference>
<dbReference type="GO" id="GO:0016042">
    <property type="term" value="P:lipid catabolic process"/>
    <property type="evidence" value="ECO:0007669"/>
    <property type="project" value="UniProtKB-KW"/>
</dbReference>
<dbReference type="Gene3D" id="1.10.260.130">
    <property type="match status" value="1"/>
</dbReference>
<dbReference type="Gene3D" id="3.40.50.1820">
    <property type="entry name" value="alpha/beta hydrolase"/>
    <property type="match status" value="1"/>
</dbReference>
<dbReference type="InterPro" id="IPR029058">
    <property type="entry name" value="AB_hydrolase_fold"/>
</dbReference>
<dbReference type="InterPro" id="IPR005152">
    <property type="entry name" value="Lipase_secreted"/>
</dbReference>
<dbReference type="PANTHER" id="PTHR34853">
    <property type="match status" value="1"/>
</dbReference>
<dbReference type="PANTHER" id="PTHR34853:SF1">
    <property type="entry name" value="LIPASE 5"/>
    <property type="match status" value="1"/>
</dbReference>
<dbReference type="Pfam" id="PF03583">
    <property type="entry name" value="LIP"/>
    <property type="match status" value="1"/>
</dbReference>
<dbReference type="SUPFAM" id="SSF53474">
    <property type="entry name" value="alpha/beta-Hydrolases"/>
    <property type="match status" value="1"/>
</dbReference>
<evidence type="ECO:0000250" key="1">
    <source>
        <dbReference type="UniProtKB" id="A8QCW4"/>
    </source>
</evidence>
<evidence type="ECO:0000255" key="2"/>
<evidence type="ECO:0000255" key="3">
    <source>
        <dbReference type="PROSITE-ProRule" id="PRU00498"/>
    </source>
</evidence>
<evidence type="ECO:0000256" key="4">
    <source>
        <dbReference type="SAM" id="MobiDB-lite"/>
    </source>
</evidence>
<evidence type="ECO:0000269" key="5">
    <source>
    </source>
</evidence>
<evidence type="ECO:0000303" key="6">
    <source>
    </source>
</evidence>
<evidence type="ECO:0000303" key="7">
    <source ref="1"/>
</evidence>
<evidence type="ECO:0000305" key="8"/>
<evidence type="ECO:0000305" key="9">
    <source>
    </source>
</evidence>
<comment type="function">
    <text evidence="5 9">Secreted lipase that hydrolyzes acylglycerol lipids such as triacylglycerols and consequently releases free fatty acid (PubMed:31860440). Can hydrolyze 4-nitrophenyl palmitate to release 4-nitrophenol and palmitoic acid (PubMed:31860440). Due to an absence of fatty acid synthase genes in Malassezia species, secretory lipases are essential for the yeast to generate free fatty acids from degradation of sebum and assimilate them as lipid sources for growth (PubMed:31860440). Plays important roles not only in lipid metabolism but also in the immune response of host cells and pathogenesis (Probable).</text>
</comment>
<comment type="catalytic activity">
    <reaction evidence="9">
        <text>a triacylglycerol + H2O = a diacylglycerol + a fatty acid + H(+)</text>
        <dbReference type="Rhea" id="RHEA:12044"/>
        <dbReference type="ChEBI" id="CHEBI:15377"/>
        <dbReference type="ChEBI" id="CHEBI:15378"/>
        <dbReference type="ChEBI" id="CHEBI:17855"/>
        <dbReference type="ChEBI" id="CHEBI:18035"/>
        <dbReference type="ChEBI" id="CHEBI:28868"/>
        <dbReference type="EC" id="3.1.1.3"/>
    </reaction>
</comment>
<comment type="catalytic activity">
    <reaction evidence="9">
        <text>a monoacylglycerol + H2O = glycerol + a fatty acid + H(+)</text>
        <dbReference type="Rhea" id="RHEA:15245"/>
        <dbReference type="ChEBI" id="CHEBI:15377"/>
        <dbReference type="ChEBI" id="CHEBI:15378"/>
        <dbReference type="ChEBI" id="CHEBI:17408"/>
        <dbReference type="ChEBI" id="CHEBI:17754"/>
        <dbReference type="ChEBI" id="CHEBI:28868"/>
    </reaction>
</comment>
<comment type="catalytic activity">
    <reaction evidence="9">
        <text>a diacylglycerol + H2O = a monoacylglycerol + a fatty acid + H(+)</text>
        <dbReference type="Rhea" id="RHEA:32731"/>
        <dbReference type="ChEBI" id="CHEBI:15377"/>
        <dbReference type="ChEBI" id="CHEBI:15378"/>
        <dbReference type="ChEBI" id="CHEBI:17408"/>
        <dbReference type="ChEBI" id="CHEBI:18035"/>
        <dbReference type="ChEBI" id="CHEBI:28868"/>
    </reaction>
</comment>
<comment type="subcellular location">
    <subcellularLocation>
        <location evidence="5">Secreted</location>
    </subcellularLocation>
    <text evidence="5">Secreted in response to the alkaline environment.</text>
</comment>
<comment type="induction">
    <text evidence="5">Constitutively expressed regardless of pH conditions or exposure time.</text>
</comment>
<comment type="similarity">
    <text evidence="8">Belongs to the AB hydrolase superfamily. Lipase family. Class Lip subfamily.</text>
</comment>
<sequence>MVRLSYVRFGVAWCIAIIIVSGFSNAASDNFYTPKNGWRSSSAGDILAWRSIDASGIKANVDLTVAYQILYRTSQNSPKNPQHSVTTILVPKNSVKNKLVVVGEAQDSNNANSVPSVGFVSGSRDSPNLVVDESLLVPYLQAGYIVTVPDSEGPLNAFTAGRSGGYQTLDSIRATLSFDKLSLNKNTTVAGFGYSGGGQAISWAAALQQSYAPEIHVAGWAFGGFIPNVTALVHHADSSRASGYAASAITGLVDAYPDLEKASKSLLTSDGQDMLDFVRSNPITEVVSKYANVDVLGSKFFKRDGGLFLSKAYRDVARQNMQGTSQNEVPHVPQYVYHAESDEVVPYNSALQTVQYWCRHGAKVEFVTYTDDKLNHNNTQVTGSQPVFTFIQRLLNGKKVSWDACSFVKENTGPSASSSAGGPHVVPIPTGGHHTQSGSAHGGHSSEHAASSTHAPAGTGHNTSGTGPHASSKPSPSLHPSTGATSPAPSSHRETSGGAAGFGARVASRRRAAPPRTMPAPPLMER</sequence>
<reference key="1">
    <citation type="submission" date="2010-07" db="EMBL/GenBank/DDBJ databases">
        <title>Malassezia furfur lipase gene family.</title>
        <authorList>
            <person name="Shibata N."/>
            <person name="Tsugawa H."/>
            <person name="Okawa Y."/>
        </authorList>
    </citation>
    <scope>NUCLEOTIDE SEQUENCE [GENOMIC DNA]</scope>
    <source>
        <strain>NBRC 0656</strain>
    </source>
</reference>
<reference key="2">
    <citation type="journal article" date="2020" name="Microbiology">
        <title>Ambient pH regulates secretion of lipases in Malassezia furfur.</title>
        <authorList>
            <person name="Juntachai W."/>
            <person name="Chaichompoo A."/>
            <person name="Chanarat S."/>
        </authorList>
    </citation>
    <scope>FUNCTION</scope>
    <scope>SUBCELLULAR LOCATION</scope>
    <scope>INDUCTION</scope>
</reference>
<protein>
    <recommendedName>
        <fullName evidence="6">Secreted triacylglycerol lipase LIP4</fullName>
        <ecNumber evidence="9">3.1.1.-</ecNumber>
        <ecNumber evidence="9">3.1.1.3</ecNumber>
    </recommendedName>
</protein>